<dbReference type="EMBL" id="CU329672">
    <property type="protein sequence ID" value="CAA19305.1"/>
    <property type="molecule type" value="Genomic_DNA"/>
</dbReference>
<dbReference type="PIR" id="T41008">
    <property type="entry name" value="T41008"/>
</dbReference>
<dbReference type="RefSeq" id="NP_588532.1">
    <property type="nucleotide sequence ID" value="NM_001023520.2"/>
</dbReference>
<dbReference type="SMR" id="O60081"/>
<dbReference type="FunCoup" id="O60081">
    <property type="interactions" value="349"/>
</dbReference>
<dbReference type="STRING" id="284812.O60081"/>
<dbReference type="iPTMnet" id="O60081"/>
<dbReference type="PaxDb" id="4896-SPCC1494.07.1"/>
<dbReference type="EnsemblFungi" id="SPCC1494.07.1">
    <property type="protein sequence ID" value="SPCC1494.07.1:pep"/>
    <property type="gene ID" value="SPCC1494.07"/>
</dbReference>
<dbReference type="GeneID" id="2539238"/>
<dbReference type="KEGG" id="spo:2539238"/>
<dbReference type="PomBase" id="SPCC1494.07">
    <property type="gene designation" value="trm732"/>
</dbReference>
<dbReference type="VEuPathDB" id="FungiDB:SPCC1494.07"/>
<dbReference type="eggNOG" id="KOG1810">
    <property type="taxonomic scope" value="Eukaryota"/>
</dbReference>
<dbReference type="HOGENOM" id="CLU_001011_2_0_1"/>
<dbReference type="InParanoid" id="O60081"/>
<dbReference type="OMA" id="LIMDPFD"/>
<dbReference type="PhylomeDB" id="O60081"/>
<dbReference type="PRO" id="PR:O60081"/>
<dbReference type="Proteomes" id="UP000002485">
    <property type="component" value="Chromosome III"/>
</dbReference>
<dbReference type="GO" id="GO:0005829">
    <property type="term" value="C:cytosol"/>
    <property type="evidence" value="ECO:0007005"/>
    <property type="project" value="PomBase"/>
</dbReference>
<dbReference type="GO" id="GO:0005634">
    <property type="term" value="C:nucleus"/>
    <property type="evidence" value="ECO:0007005"/>
    <property type="project" value="PomBase"/>
</dbReference>
<dbReference type="GO" id="GO:0030234">
    <property type="term" value="F:enzyme regulator activity"/>
    <property type="evidence" value="ECO:0000269"/>
    <property type="project" value="PomBase"/>
</dbReference>
<dbReference type="GO" id="GO:0030488">
    <property type="term" value="P:tRNA methylation"/>
    <property type="evidence" value="ECO:0000315"/>
    <property type="project" value="PomBase"/>
</dbReference>
<dbReference type="GO" id="GO:0002128">
    <property type="term" value="P:tRNA nucleoside ribose methylation"/>
    <property type="evidence" value="ECO:0000250"/>
    <property type="project" value="UniProtKB"/>
</dbReference>
<dbReference type="InterPro" id="IPR016024">
    <property type="entry name" value="ARM-type_fold"/>
</dbReference>
<dbReference type="InterPro" id="IPR056843">
    <property type="entry name" value="THADA-like_TPR"/>
</dbReference>
<dbReference type="InterPro" id="IPR056842">
    <property type="entry name" value="THADA-like_TPR_C"/>
</dbReference>
<dbReference type="InterPro" id="IPR019442">
    <property type="entry name" value="THADA/TRM732_DUF2428"/>
</dbReference>
<dbReference type="InterPro" id="IPR051954">
    <property type="entry name" value="tRNA_methyltransferase_THADA"/>
</dbReference>
<dbReference type="PANTHER" id="PTHR14387:SF0">
    <property type="entry name" value="DUF2428 DOMAIN-CONTAINING PROTEIN"/>
    <property type="match status" value="1"/>
</dbReference>
<dbReference type="PANTHER" id="PTHR14387">
    <property type="entry name" value="THADA/DEATH RECEPTOR INTERACTING PROTEIN"/>
    <property type="match status" value="1"/>
</dbReference>
<dbReference type="Pfam" id="PF10350">
    <property type="entry name" value="DUF2428"/>
    <property type="match status" value="1"/>
</dbReference>
<dbReference type="Pfam" id="PF25150">
    <property type="entry name" value="TPR_Trm732"/>
    <property type="match status" value="1"/>
</dbReference>
<dbReference type="Pfam" id="PF25151">
    <property type="entry name" value="TPR_Trm732_C"/>
    <property type="match status" value="1"/>
</dbReference>
<dbReference type="SUPFAM" id="SSF48371">
    <property type="entry name" value="ARM repeat"/>
    <property type="match status" value="1"/>
</dbReference>
<accession>O60081</accession>
<feature type="chain" id="PRO_0000372374" description="tRNA (32-2'-O)-methyltransferase regulator trm732">
    <location>
        <begin position="1"/>
        <end position="1502"/>
    </location>
</feature>
<keyword id="KW-0963">Cytoplasm</keyword>
<keyword id="KW-0539">Nucleus</keyword>
<keyword id="KW-1185">Reference proteome</keyword>
<keyword id="KW-0819">tRNA processing</keyword>
<gene>
    <name evidence="4" type="primary">trm732</name>
    <name evidence="4" type="ORF">SPCC1494.07</name>
</gene>
<name>THADA_SCHPO</name>
<protein>
    <recommendedName>
        <fullName evidence="3">tRNA (32-2'-O)-methyltransferase regulator trm732</fullName>
    </recommendedName>
</protein>
<reference key="1">
    <citation type="journal article" date="2002" name="Nature">
        <title>The genome sequence of Schizosaccharomyces pombe.</title>
        <authorList>
            <person name="Wood V."/>
            <person name="Gwilliam R."/>
            <person name="Rajandream M.A."/>
            <person name="Lyne M.H."/>
            <person name="Lyne R."/>
            <person name="Stewart A."/>
            <person name="Sgouros J.G."/>
            <person name="Peat N."/>
            <person name="Hayles J."/>
            <person name="Baker S.G."/>
            <person name="Basham D."/>
            <person name="Bowman S."/>
            <person name="Brooks K."/>
            <person name="Brown D."/>
            <person name="Brown S."/>
            <person name="Chillingworth T."/>
            <person name="Churcher C.M."/>
            <person name="Collins M."/>
            <person name="Connor R."/>
            <person name="Cronin A."/>
            <person name="Davis P."/>
            <person name="Feltwell T."/>
            <person name="Fraser A."/>
            <person name="Gentles S."/>
            <person name="Goble A."/>
            <person name="Hamlin N."/>
            <person name="Harris D.E."/>
            <person name="Hidalgo J."/>
            <person name="Hodgson G."/>
            <person name="Holroyd S."/>
            <person name="Hornsby T."/>
            <person name="Howarth S."/>
            <person name="Huckle E.J."/>
            <person name="Hunt S."/>
            <person name="Jagels K."/>
            <person name="James K.D."/>
            <person name="Jones L."/>
            <person name="Jones M."/>
            <person name="Leather S."/>
            <person name="McDonald S."/>
            <person name="McLean J."/>
            <person name="Mooney P."/>
            <person name="Moule S."/>
            <person name="Mungall K.L."/>
            <person name="Murphy L.D."/>
            <person name="Niblett D."/>
            <person name="Odell C."/>
            <person name="Oliver K."/>
            <person name="O'Neil S."/>
            <person name="Pearson D."/>
            <person name="Quail M.A."/>
            <person name="Rabbinowitsch E."/>
            <person name="Rutherford K.M."/>
            <person name="Rutter S."/>
            <person name="Saunders D."/>
            <person name="Seeger K."/>
            <person name="Sharp S."/>
            <person name="Skelton J."/>
            <person name="Simmonds M.N."/>
            <person name="Squares R."/>
            <person name="Squares S."/>
            <person name="Stevens K."/>
            <person name="Taylor K."/>
            <person name="Taylor R.G."/>
            <person name="Tivey A."/>
            <person name="Walsh S.V."/>
            <person name="Warren T."/>
            <person name="Whitehead S."/>
            <person name="Woodward J.R."/>
            <person name="Volckaert G."/>
            <person name="Aert R."/>
            <person name="Robben J."/>
            <person name="Grymonprez B."/>
            <person name="Weltjens I."/>
            <person name="Vanstreels E."/>
            <person name="Rieger M."/>
            <person name="Schaefer M."/>
            <person name="Mueller-Auer S."/>
            <person name="Gabel C."/>
            <person name="Fuchs M."/>
            <person name="Duesterhoeft A."/>
            <person name="Fritzc C."/>
            <person name="Holzer E."/>
            <person name="Moestl D."/>
            <person name="Hilbert H."/>
            <person name="Borzym K."/>
            <person name="Langer I."/>
            <person name="Beck A."/>
            <person name="Lehrach H."/>
            <person name="Reinhardt R."/>
            <person name="Pohl T.M."/>
            <person name="Eger P."/>
            <person name="Zimmermann W."/>
            <person name="Wedler H."/>
            <person name="Wambutt R."/>
            <person name="Purnelle B."/>
            <person name="Goffeau A."/>
            <person name="Cadieu E."/>
            <person name="Dreano S."/>
            <person name="Gloux S."/>
            <person name="Lelaure V."/>
            <person name="Mottier S."/>
            <person name="Galibert F."/>
            <person name="Aves S.J."/>
            <person name="Xiang Z."/>
            <person name="Hunt C."/>
            <person name="Moore K."/>
            <person name="Hurst S.M."/>
            <person name="Lucas M."/>
            <person name="Rochet M."/>
            <person name="Gaillardin C."/>
            <person name="Tallada V.A."/>
            <person name="Garzon A."/>
            <person name="Thode G."/>
            <person name="Daga R.R."/>
            <person name="Cruzado L."/>
            <person name="Jimenez J."/>
            <person name="Sanchez M."/>
            <person name="del Rey F."/>
            <person name="Benito J."/>
            <person name="Dominguez A."/>
            <person name="Revuelta J.L."/>
            <person name="Moreno S."/>
            <person name="Armstrong J."/>
            <person name="Forsburg S.L."/>
            <person name="Cerutti L."/>
            <person name="Lowe T."/>
            <person name="McCombie W.R."/>
            <person name="Paulsen I."/>
            <person name="Potashkin J."/>
            <person name="Shpakovski G.V."/>
            <person name="Ussery D."/>
            <person name="Barrell B.G."/>
            <person name="Nurse P."/>
        </authorList>
    </citation>
    <scope>NUCLEOTIDE SEQUENCE [LARGE SCALE GENOMIC DNA]</scope>
    <source>
        <strain>972 / ATCC 24843</strain>
    </source>
</reference>
<reference key="2">
    <citation type="journal article" date="2006" name="Nat. Biotechnol.">
        <title>ORFeome cloning and global analysis of protein localization in the fission yeast Schizosaccharomyces pombe.</title>
        <authorList>
            <person name="Matsuyama A."/>
            <person name="Arai R."/>
            <person name="Yashiroda Y."/>
            <person name="Shirai A."/>
            <person name="Kamata A."/>
            <person name="Sekido S."/>
            <person name="Kobayashi Y."/>
            <person name="Hashimoto A."/>
            <person name="Hamamoto M."/>
            <person name="Hiraoka Y."/>
            <person name="Horinouchi S."/>
            <person name="Yoshida M."/>
        </authorList>
    </citation>
    <scope>SUBCELLULAR LOCATION [LARGE SCALE ANALYSIS]</scope>
</reference>
<reference key="3">
    <citation type="journal article" date="2015" name="RNA">
        <title>Conservation of an intricate circuit for crucial modifications of the tRNAPhe anticodon loop in eukaryotes.</title>
        <authorList>
            <person name="Guy M.P."/>
            <person name="Phizicky E.M."/>
        </authorList>
    </citation>
    <scope>FUNCTION</scope>
    <scope>DISRUPTION PHENOTYPE</scope>
</reference>
<comment type="function">
    <text evidence="2">Together with methyltransferase trm7, methylates the 2'-O-ribose of nucleotides at position 32 of the anticodon loop of substrate tRNAs.</text>
</comment>
<comment type="subcellular location">
    <subcellularLocation>
        <location evidence="1">Cytoplasm</location>
    </subcellularLocation>
    <subcellularLocation>
        <location evidence="1">Nucleus</location>
    </subcellularLocation>
</comment>
<comment type="disruption phenotype">
    <text evidence="2">Loss of methylation of the 2'-O-ribose of cytidine at position 32 of tRNA(Phe) (PubMed:25404562). Increases occurrence of 1-methylguanosine residue at position 37 in the tRNA anticodon loop of tRNA(Phe) and decreases occurrence of wybutosine at this position (PubMed:25404562).</text>
</comment>
<comment type="similarity">
    <text evidence="3">Belongs to the THADA family.</text>
</comment>
<organism>
    <name type="scientific">Schizosaccharomyces pombe (strain 972 / ATCC 24843)</name>
    <name type="common">Fission yeast</name>
    <dbReference type="NCBI Taxonomy" id="284812"/>
    <lineage>
        <taxon>Eukaryota</taxon>
        <taxon>Fungi</taxon>
        <taxon>Dikarya</taxon>
        <taxon>Ascomycota</taxon>
        <taxon>Taphrinomycotina</taxon>
        <taxon>Schizosaccharomycetes</taxon>
        <taxon>Schizosaccharomycetales</taxon>
        <taxon>Schizosaccharomycetaceae</taxon>
        <taxon>Schizosaccharomyces</taxon>
    </lineage>
</organism>
<proteinExistence type="inferred from homology"/>
<evidence type="ECO:0000269" key="1">
    <source>
    </source>
</evidence>
<evidence type="ECO:0000269" key="2">
    <source>
    </source>
</evidence>
<evidence type="ECO:0000305" key="3"/>
<evidence type="ECO:0000312" key="4">
    <source>
        <dbReference type="PomBase" id="SPCC1494.07"/>
    </source>
</evidence>
<sequence length="1502" mass="171168">MDLSVIKAASLDLESLPSQPTVSSFQQLRETFIQSKSEDWYLKNGLFFRYYSFLKSSLENATLDGPSQVACLDTISVWLRRIFNACKQDPEISKYVWDTMELKFWTNLFSLPANKISIPGLTGVQVAVKDVFSKSLQLYLLVCPSEDIKNDFLLDSLKHALHWDRHAKVVCTAIQLLVKVTGAEAVFAFQPDFFEQSLKLLKDYSYAQAISSTILTVLTLRFKSLSEETEDREEVETKWMNIWCPIILYEFYGNDRQVQAGMSSFLIPSLLGVSPGITVKFLSRLQNYPNVSKDARDAACLYALKIAKDSKIIKNLDLVKEHAFVKTLFKHPDIKIQLACFRLIALCPNVSSPLSFEDFDCLESNIEFSFNVLDPDSRQILLKSMQDFFIRLRASCHSIARTMRSRHSDKVALSGLLDRAMQFLTSFISVCKKHLYPTCNYQQVLVSLSFLDTLISFGLDDNVESSSIREAQHDFPFSMVIIDRDLSRLMIDRLKDPYDDIRNLCLKILLSYKSLPGFISDSDAYFLFNHGLELLNAVRSHECDGGAKTIYLCNHFMEKSVPGSVLANTKVILNRLKSNIEHAKTSLLEAAVNCPLQGYLIQLTYIFQSLSPTIVKNDNESWKNIVMELIKASETIWGLIKDVLCDDSPEGNLPDGEGEGGIVSNLEDTPAQLILSYSWRSLKETSSLLTVLLTKCLSLFDEEFTPFTLNYYGELMMTWLWEIRHRGAFTSVYPCFIEYCSFLFECNKHEISELPDPWLHKNLSVIQEKSSFITRRSGGIPLSITAILVAGKDKREQLIEQTVISLISIAKQPVEQKNIAGQFDLPQVHAMNTLKTIFTEHRLSSVSVEYLEPAIALSIEGFSHELWPIRNCSVMLFTALINRAFGSKKPKDAVNLGNNKGLSTKMFFSKFPTLHDYLLRELEVSVASLSSNDQPSTGLYPILNMFSRLQYAQPYGNENEWTGLSQFEPLIFKCTASRICKVREIASLSLTCLLDCSKMTTFIVSQLKGVAGLQQNEIHGKLLTIRAVLSCFFSKLTLQQVQEFYEVVPLAFINCFLEFTSSKTSFYAKKLFLEVLNSYFMSNTDSNAKRLQQLRRMTMDYCKRMLLDRKANVTNVFNTIGLPIHQQMAATIFLENLKEFSVYCDAHSIGFLVSKLLHYEFYEVQLTTLRSIVDSPRKKIIVNNPEILQALIKLTPRNQWSQVRALALSLLSDSLNSTSYRLLGISCSDMVSNILSNECLPIKESFIVLLGSCIKQLKTENFLEYKVTFAKWVEILLSYSNEYQPFSSRKAALDSIIHFDLFNAESTAEAFSFEFYILYLLLGDFLNDDDEEIRSLAANHAYQVLGTSAQCVTEIWNLWKLRTKATFGGQHDFQHCINKRLILEDGCELASVQLDNALSRNCSLFERERQNLYYSDNQKLEDLLFYASYPNEKLKDWATDGINAILSRFEDVSRDGPLGKTSDPNVWFTIYKIIRIAEHVHLPLDRVHSLMNRIDGHPSFCQ</sequence>